<dbReference type="EMBL" id="AE014299">
    <property type="protein sequence ID" value="AAN54425.1"/>
    <property type="molecule type" value="Genomic_DNA"/>
</dbReference>
<dbReference type="RefSeq" id="NP_716980.1">
    <property type="nucleotide sequence ID" value="NC_004347.2"/>
</dbReference>
<dbReference type="RefSeq" id="WP_006080791.1">
    <property type="nucleotide sequence ID" value="NZ_CP053946.1"/>
</dbReference>
<dbReference type="SMR" id="Q8EH70"/>
<dbReference type="STRING" id="211586.SO_1360"/>
<dbReference type="PaxDb" id="211586-SO_1360"/>
<dbReference type="GeneID" id="94728937"/>
<dbReference type="KEGG" id="son:SO_1360"/>
<dbReference type="PATRIC" id="fig|1028802.3.peg.347"/>
<dbReference type="eggNOG" id="COG0335">
    <property type="taxonomic scope" value="Bacteria"/>
</dbReference>
<dbReference type="HOGENOM" id="CLU_103507_2_2_6"/>
<dbReference type="OrthoDB" id="9803541at2"/>
<dbReference type="PhylomeDB" id="Q8EH70"/>
<dbReference type="BioCyc" id="SONE211586:G1GMP-1258-MONOMER"/>
<dbReference type="PRO" id="PR:Q8EH70"/>
<dbReference type="Proteomes" id="UP000008186">
    <property type="component" value="Chromosome"/>
</dbReference>
<dbReference type="GO" id="GO:0022625">
    <property type="term" value="C:cytosolic large ribosomal subunit"/>
    <property type="evidence" value="ECO:0000318"/>
    <property type="project" value="GO_Central"/>
</dbReference>
<dbReference type="GO" id="GO:0003735">
    <property type="term" value="F:structural constituent of ribosome"/>
    <property type="evidence" value="ECO:0000318"/>
    <property type="project" value="GO_Central"/>
</dbReference>
<dbReference type="GO" id="GO:0006412">
    <property type="term" value="P:translation"/>
    <property type="evidence" value="ECO:0007669"/>
    <property type="project" value="UniProtKB-UniRule"/>
</dbReference>
<dbReference type="FunFam" id="2.30.30.790:FF:000001">
    <property type="entry name" value="50S ribosomal protein L19"/>
    <property type="match status" value="1"/>
</dbReference>
<dbReference type="Gene3D" id="2.30.30.790">
    <property type="match status" value="1"/>
</dbReference>
<dbReference type="HAMAP" id="MF_00402">
    <property type="entry name" value="Ribosomal_bL19"/>
    <property type="match status" value="1"/>
</dbReference>
<dbReference type="InterPro" id="IPR001857">
    <property type="entry name" value="Ribosomal_bL19"/>
</dbReference>
<dbReference type="InterPro" id="IPR018257">
    <property type="entry name" value="Ribosomal_bL19_CS"/>
</dbReference>
<dbReference type="InterPro" id="IPR038657">
    <property type="entry name" value="Ribosomal_bL19_sf"/>
</dbReference>
<dbReference type="InterPro" id="IPR008991">
    <property type="entry name" value="Translation_prot_SH3-like_sf"/>
</dbReference>
<dbReference type="NCBIfam" id="TIGR01024">
    <property type="entry name" value="rplS_bact"/>
    <property type="match status" value="1"/>
</dbReference>
<dbReference type="PANTHER" id="PTHR15680:SF9">
    <property type="entry name" value="LARGE RIBOSOMAL SUBUNIT PROTEIN BL19M"/>
    <property type="match status" value="1"/>
</dbReference>
<dbReference type="PANTHER" id="PTHR15680">
    <property type="entry name" value="RIBOSOMAL PROTEIN L19"/>
    <property type="match status" value="1"/>
</dbReference>
<dbReference type="Pfam" id="PF01245">
    <property type="entry name" value="Ribosomal_L19"/>
    <property type="match status" value="1"/>
</dbReference>
<dbReference type="PIRSF" id="PIRSF002191">
    <property type="entry name" value="Ribosomal_L19"/>
    <property type="match status" value="1"/>
</dbReference>
<dbReference type="PRINTS" id="PR00061">
    <property type="entry name" value="RIBOSOMALL19"/>
</dbReference>
<dbReference type="SUPFAM" id="SSF50104">
    <property type="entry name" value="Translation proteins SH3-like domain"/>
    <property type="match status" value="1"/>
</dbReference>
<dbReference type="PROSITE" id="PS01015">
    <property type="entry name" value="RIBOSOMAL_L19"/>
    <property type="match status" value="1"/>
</dbReference>
<proteinExistence type="inferred from homology"/>
<organism>
    <name type="scientific">Shewanella oneidensis (strain ATCC 700550 / JCM 31522 / CIP 106686 / LMG 19005 / NCIMB 14063 / MR-1)</name>
    <dbReference type="NCBI Taxonomy" id="211586"/>
    <lineage>
        <taxon>Bacteria</taxon>
        <taxon>Pseudomonadati</taxon>
        <taxon>Pseudomonadota</taxon>
        <taxon>Gammaproteobacteria</taxon>
        <taxon>Alteromonadales</taxon>
        <taxon>Shewanellaceae</taxon>
        <taxon>Shewanella</taxon>
    </lineage>
</organism>
<protein>
    <recommendedName>
        <fullName evidence="1">Large ribosomal subunit protein bL19</fullName>
    </recommendedName>
    <alternativeName>
        <fullName evidence="2">50S ribosomal protein L19</fullName>
    </alternativeName>
</protein>
<accession>Q8EH70</accession>
<evidence type="ECO:0000255" key="1">
    <source>
        <dbReference type="HAMAP-Rule" id="MF_00402"/>
    </source>
</evidence>
<evidence type="ECO:0000305" key="2"/>
<reference key="1">
    <citation type="journal article" date="2002" name="Nat. Biotechnol.">
        <title>Genome sequence of the dissimilatory metal ion-reducing bacterium Shewanella oneidensis.</title>
        <authorList>
            <person name="Heidelberg J.F."/>
            <person name="Paulsen I.T."/>
            <person name="Nelson K.E."/>
            <person name="Gaidos E.J."/>
            <person name="Nelson W.C."/>
            <person name="Read T.D."/>
            <person name="Eisen J.A."/>
            <person name="Seshadri R."/>
            <person name="Ward N.L."/>
            <person name="Methe B.A."/>
            <person name="Clayton R.A."/>
            <person name="Meyer T."/>
            <person name="Tsapin A."/>
            <person name="Scott J."/>
            <person name="Beanan M.J."/>
            <person name="Brinkac L.M."/>
            <person name="Daugherty S.C."/>
            <person name="DeBoy R.T."/>
            <person name="Dodson R.J."/>
            <person name="Durkin A.S."/>
            <person name="Haft D.H."/>
            <person name="Kolonay J.F."/>
            <person name="Madupu R."/>
            <person name="Peterson J.D."/>
            <person name="Umayam L.A."/>
            <person name="White O."/>
            <person name="Wolf A.M."/>
            <person name="Vamathevan J.J."/>
            <person name="Weidman J.F."/>
            <person name="Impraim M."/>
            <person name="Lee K."/>
            <person name="Berry K.J."/>
            <person name="Lee C."/>
            <person name="Mueller J."/>
            <person name="Khouri H.M."/>
            <person name="Gill J."/>
            <person name="Utterback T.R."/>
            <person name="McDonald L.A."/>
            <person name="Feldblyum T.V."/>
            <person name="Smith H.O."/>
            <person name="Venter J.C."/>
            <person name="Nealson K.H."/>
            <person name="Fraser C.M."/>
        </authorList>
    </citation>
    <scope>NUCLEOTIDE SEQUENCE [LARGE SCALE GENOMIC DNA]</scope>
    <source>
        <strain>ATCC 700550 / JCM 31522 / CIP 106686 / LMG 19005 / NCIMB 14063 / MR-1</strain>
    </source>
</reference>
<gene>
    <name evidence="1" type="primary">rplS</name>
    <name type="ordered locus">SO_1360</name>
</gene>
<name>RL19_SHEON</name>
<keyword id="KW-1185">Reference proteome</keyword>
<keyword id="KW-0687">Ribonucleoprotein</keyword>
<keyword id="KW-0689">Ribosomal protein</keyword>
<feature type="chain" id="PRO_0000163525" description="Large ribosomal subunit protein bL19">
    <location>
        <begin position="1"/>
        <end position="117"/>
    </location>
</feature>
<sequence>MNNIIKMLNDEQMKQDVPAFGAGDTVVVQVRVKEGDKERLQAFEGVVIAKRNRGLHSAFTVRKISNGEGVERAFQTHSPLIASIEVKRRGRVRRAKLYYLRDRSGKSARIREKLATK</sequence>
<comment type="function">
    <text evidence="1">This protein is located at the 30S-50S ribosomal subunit interface and may play a role in the structure and function of the aminoacyl-tRNA binding site.</text>
</comment>
<comment type="similarity">
    <text evidence="1">Belongs to the bacterial ribosomal protein bL19 family.</text>
</comment>